<organism>
    <name type="scientific">Bovine herpesvirus 1.1 (strain Cooper)</name>
    <name type="common">BoHV-1</name>
    <name type="synonym">Infectious bovine rhinotracheitis virus</name>
    <dbReference type="NCBI Taxonomy" id="10323"/>
    <lineage>
        <taxon>Viruses</taxon>
        <taxon>Duplodnaviria</taxon>
        <taxon>Heunggongvirae</taxon>
        <taxon>Peploviricota</taxon>
        <taxon>Herviviricetes</taxon>
        <taxon>Herpesvirales</taxon>
        <taxon>Orthoherpesviridae</taxon>
        <taxon>Alphaherpesvirinae</taxon>
        <taxon>Varicellovirus</taxon>
        <taxon>Varicellovirus bovinealpha1</taxon>
    </lineage>
</organism>
<proteinExistence type="evidence at protein level"/>
<accession>P29128</accession>
<name>ICP0_BHV1C</name>
<protein>
    <recommendedName>
        <fullName>E3 ubiquitin-protein ligase ICP0</fullName>
        <ecNumber>2.3.2.27</ecNumber>
    </recommendedName>
    <alternativeName>
        <fullName>IER 2.9/ER2.6</fullName>
    </alternativeName>
    <alternativeName>
        <fullName>P135 protein</fullName>
    </alternativeName>
    <alternativeName>
        <fullName evidence="5">RING-type E3 ubiquitin transferase ICP0</fullName>
    </alternativeName>
</protein>
<dbReference type="EC" id="2.3.2.27"/>
<dbReference type="EMBL" id="M84465">
    <property type="protein sequence ID" value="AAA46062.1"/>
    <property type="molecule type" value="Genomic_DNA"/>
</dbReference>
<dbReference type="EMBL" id="AJ004801">
    <property type="protein sequence ID" value="CAA06138.1"/>
    <property type="molecule type" value="Genomic_DNA"/>
</dbReference>
<dbReference type="PIR" id="B38209">
    <property type="entry name" value="EDBE23"/>
</dbReference>
<dbReference type="RefSeq" id="NP_045363.1">
    <property type="nucleotide sequence ID" value="NC_001847.1"/>
</dbReference>
<dbReference type="SMR" id="P29128"/>
<dbReference type="IntAct" id="P29128">
    <property type="interactions" value="4"/>
</dbReference>
<dbReference type="Proteomes" id="UP000202075">
    <property type="component" value="Segment"/>
</dbReference>
<dbReference type="GO" id="GO:0042025">
    <property type="term" value="C:host cell nucleus"/>
    <property type="evidence" value="ECO:0000315"/>
    <property type="project" value="AgBase"/>
</dbReference>
<dbReference type="GO" id="GO:0075341">
    <property type="term" value="C:host cell PML body"/>
    <property type="evidence" value="ECO:0000315"/>
    <property type="project" value="AgBase"/>
</dbReference>
<dbReference type="GO" id="GO:0003677">
    <property type="term" value="F:DNA binding"/>
    <property type="evidence" value="ECO:0007669"/>
    <property type="project" value="UniProtKB-KW"/>
</dbReference>
<dbReference type="GO" id="GO:0061630">
    <property type="term" value="F:ubiquitin protein ligase activity"/>
    <property type="evidence" value="ECO:0007669"/>
    <property type="project" value="TreeGrafter"/>
</dbReference>
<dbReference type="GO" id="GO:0008270">
    <property type="term" value="F:zinc ion binding"/>
    <property type="evidence" value="ECO:0007669"/>
    <property type="project" value="UniProtKB-KW"/>
</dbReference>
<dbReference type="GO" id="GO:0006513">
    <property type="term" value="P:protein monoubiquitination"/>
    <property type="evidence" value="ECO:0007669"/>
    <property type="project" value="TreeGrafter"/>
</dbReference>
<dbReference type="GO" id="GO:0000209">
    <property type="term" value="P:protein polyubiquitination"/>
    <property type="evidence" value="ECO:0007669"/>
    <property type="project" value="TreeGrafter"/>
</dbReference>
<dbReference type="GO" id="GO:0075342">
    <property type="term" value="P:symbiont-mediated disruption of host cell PML body"/>
    <property type="evidence" value="ECO:0000314"/>
    <property type="project" value="UniProtKB"/>
</dbReference>
<dbReference type="GO" id="GO:0039593">
    <property type="term" value="P:symbiont-mediated perturbation of host exit from mitosis"/>
    <property type="evidence" value="ECO:0007669"/>
    <property type="project" value="UniProtKB-KW"/>
</dbReference>
<dbReference type="GO" id="GO:0039648">
    <property type="term" value="P:symbiont-mediated perturbation of host ubiquitin-like protein modification"/>
    <property type="evidence" value="ECO:0007669"/>
    <property type="project" value="UniProtKB-KW"/>
</dbReference>
<dbReference type="GO" id="GO:0039548">
    <property type="term" value="P:symbiont-mediated suppression of host cytoplasmic pattern recognition receptor signaling pathway via inhibition of IRF3 activity"/>
    <property type="evidence" value="ECO:0007669"/>
    <property type="project" value="UniProtKB-KW"/>
</dbReference>
<dbReference type="GO" id="GO:0039557">
    <property type="term" value="P:symbiont-mediated suppression of host cytoplasmic pattern recognition receptor signaling pathway via inhibition of IRF7 activity"/>
    <property type="evidence" value="ECO:0000315"/>
    <property type="project" value="AgBase"/>
</dbReference>
<dbReference type="CDD" id="cd23130">
    <property type="entry name" value="RING-HC_EHV1-like"/>
    <property type="match status" value="1"/>
</dbReference>
<dbReference type="FunFam" id="3.30.40.10:FF:000136">
    <property type="entry name" value="E3 ubiquitin-protein ligase Topors"/>
    <property type="match status" value="1"/>
</dbReference>
<dbReference type="Gene3D" id="3.30.40.10">
    <property type="entry name" value="Zinc/RING finger domain, C3HC4 (zinc finger)"/>
    <property type="match status" value="1"/>
</dbReference>
<dbReference type="InterPro" id="IPR001841">
    <property type="entry name" value="Znf_RING"/>
</dbReference>
<dbReference type="InterPro" id="IPR013083">
    <property type="entry name" value="Znf_RING/FYVE/PHD"/>
</dbReference>
<dbReference type="InterPro" id="IPR017907">
    <property type="entry name" value="Znf_RING_CS"/>
</dbReference>
<dbReference type="PANTHER" id="PTHR46077">
    <property type="entry name" value="E3 UBIQUITIN-PROTEIN LIGASE TOPORS"/>
    <property type="match status" value="1"/>
</dbReference>
<dbReference type="PANTHER" id="PTHR46077:SF1">
    <property type="entry name" value="TOP1 BINDING ARGININE_SERINE RICH PROTEIN, E3 UBIQUITIN LIGASE"/>
    <property type="match status" value="1"/>
</dbReference>
<dbReference type="Pfam" id="PF13639">
    <property type="entry name" value="zf-RING_2"/>
    <property type="match status" value="1"/>
</dbReference>
<dbReference type="SMART" id="SM00184">
    <property type="entry name" value="RING"/>
    <property type="match status" value="1"/>
</dbReference>
<dbReference type="SUPFAM" id="SSF57850">
    <property type="entry name" value="RING/U-box"/>
    <property type="match status" value="1"/>
</dbReference>
<dbReference type="PROSITE" id="PS00518">
    <property type="entry name" value="ZF_RING_1"/>
    <property type="match status" value="1"/>
</dbReference>
<dbReference type="PROSITE" id="PS50089">
    <property type="entry name" value="ZF_RING_2"/>
    <property type="match status" value="1"/>
</dbReference>
<evidence type="ECO:0000250" key="1"/>
<evidence type="ECO:0000255" key="2">
    <source>
        <dbReference type="PROSITE-ProRule" id="PRU00175"/>
    </source>
</evidence>
<evidence type="ECO:0000256" key="3">
    <source>
        <dbReference type="SAM" id="MobiDB-lite"/>
    </source>
</evidence>
<evidence type="ECO:0000269" key="4">
    <source>
    </source>
</evidence>
<evidence type="ECO:0000305" key="5"/>
<reference key="1">
    <citation type="journal article" date="1992" name="J. Virol.">
        <title>Immediate-early RNA 2.9 and early RNA 2.6 of bovine herpesvirus 1 are 3' coterminal and encode a putative zinc finger transactivator protein.</title>
        <authorList>
            <person name="Wirth U.V."/>
            <person name="Fraefel C."/>
            <person name="Vogt B."/>
            <person name="Vlcek C."/>
            <person name="Paces V."/>
            <person name="Schwyzer M."/>
        </authorList>
    </citation>
    <scope>NUCLEOTIDE SEQUENCE [GENOMIC DNA]</scope>
</reference>
<reference key="2">
    <citation type="journal article" date="2010" name="J. Virol.">
        <title>Comparison of the biological and biochemical activities of several members of the alphaherpesvirus ICP0 family of proteins.</title>
        <authorList>
            <person name="Everett R.D."/>
            <person name="Boutell C."/>
            <person name="McNair C."/>
            <person name="Grant L."/>
            <person name="Orr A."/>
        </authorList>
    </citation>
    <scope>FUNCTION IN IMMUNE EVASION</scope>
</reference>
<feature type="chain" id="PRO_0000056356" description="E3 ubiquitin-protein ligase ICP0">
    <location>
        <begin position="1"/>
        <end position="676"/>
    </location>
</feature>
<feature type="zinc finger region" description="RING-type" evidence="2">
    <location>
        <begin position="13"/>
        <end position="52"/>
    </location>
</feature>
<feature type="region of interest" description="Disordered" evidence="3">
    <location>
        <begin position="101"/>
        <end position="153"/>
    </location>
</feature>
<feature type="region of interest" description="Disordered" evidence="3">
    <location>
        <begin position="266"/>
        <end position="517"/>
    </location>
</feature>
<feature type="region of interest" description="Disordered" evidence="3">
    <location>
        <begin position="555"/>
        <end position="676"/>
    </location>
</feature>
<feature type="compositionally biased region" description="Gly residues" evidence="3">
    <location>
        <begin position="123"/>
        <end position="153"/>
    </location>
</feature>
<feature type="compositionally biased region" description="Acidic residues" evidence="3">
    <location>
        <begin position="286"/>
        <end position="303"/>
    </location>
</feature>
<feature type="compositionally biased region" description="Low complexity" evidence="3">
    <location>
        <begin position="304"/>
        <end position="314"/>
    </location>
</feature>
<feature type="compositionally biased region" description="Acidic residues" evidence="3">
    <location>
        <begin position="315"/>
        <end position="328"/>
    </location>
</feature>
<feature type="compositionally biased region" description="Polar residues" evidence="3">
    <location>
        <begin position="351"/>
        <end position="361"/>
    </location>
</feature>
<feature type="compositionally biased region" description="Low complexity" evidence="3">
    <location>
        <begin position="375"/>
        <end position="388"/>
    </location>
</feature>
<feature type="compositionally biased region" description="Low complexity" evidence="3">
    <location>
        <begin position="397"/>
        <end position="411"/>
    </location>
</feature>
<feature type="compositionally biased region" description="Gly residues" evidence="3">
    <location>
        <begin position="422"/>
        <end position="439"/>
    </location>
</feature>
<feature type="compositionally biased region" description="Basic and acidic residues" evidence="3">
    <location>
        <begin position="440"/>
        <end position="450"/>
    </location>
</feature>
<feature type="compositionally biased region" description="Pro residues" evidence="3">
    <location>
        <begin position="474"/>
        <end position="484"/>
    </location>
</feature>
<feature type="compositionally biased region" description="Low complexity" evidence="3">
    <location>
        <begin position="555"/>
        <end position="597"/>
    </location>
</feature>
<gene>
    <name type="primary">BICP0</name>
</gene>
<organismHost>
    <name type="scientific">Bos taurus</name>
    <name type="common">Bovine</name>
    <dbReference type="NCBI Taxonomy" id="9913"/>
</organismHost>
<comment type="function">
    <text evidence="4">Evades nuclear antiviral defenses triggered by dsDNA viruses. Acts during the initial stages of lytic infection and the reactivation of latent viral genome. Prevents the antiviral effect of nuclear bodies by degrading host PML and SP100.</text>
</comment>
<comment type="catalytic activity">
    <reaction>
        <text>S-ubiquitinyl-[E2 ubiquitin-conjugating enzyme]-L-cysteine + [acceptor protein]-L-lysine = [E2 ubiquitin-conjugating enzyme]-L-cysteine + N(6)-ubiquitinyl-[acceptor protein]-L-lysine.</text>
        <dbReference type="EC" id="2.3.2.27"/>
    </reaction>
</comment>
<comment type="interaction">
    <interactant intactId="EBI-11292028">
        <id>P29128</id>
    </interactant>
    <interactant intactId="EBI-301834">
        <id>Q13547</id>
        <label>HDAC1</label>
    </interactant>
    <organismsDiffer>true</organismsDiffer>
    <experiments>2</experiments>
</comment>
<comment type="interaction">
    <interactant intactId="EBI-11292028">
        <id>P29128</id>
    </interactant>
    <interactant intactId="EBI-968267">
        <id>Q92985</id>
        <label>IRF7</label>
    </interactant>
    <organismsDiffer>true</organismsDiffer>
    <experiments>5</experiments>
</comment>
<comment type="domain">
    <text>The strongly acidic region might serve as a transcriptional activation domain.</text>
</comment>
<comment type="PTM">
    <text evidence="1">Auto-ubiquitinated.</text>
</comment>
<comment type="PTM">
    <text>Transactivation activity is possibly regulated through phosphorylation by casein kinase II.</text>
</comment>
<comment type="similarity">
    <text evidence="5">Belongs to the simplexviruses ICp0 family.</text>
</comment>
<sequence>MAPPAAAPELGSCCICLDAITGAARALPCLHAFCLACIRRWLEGRPTCPLCKAPVQSLIHSVASDECFEEIPVGGGPGADGALEPDAAVIWGEDYDAGPIDLTAADGEASGAGGEAGAADGSEAGGGAGGAEEAGEARGAGAGRAAGAAGGRAGRGADAAQEFIDRVARGPRLPLLPNTPEHGPGAPYLRRVVEWVEGALVGSFAVTARELAAMTDYVMAMLAECGFDDDGLADAMEPLIGEDDAPAFVRSLLFVAARCVTVGPSHLIPQQSAPPGGRGVVFLDTSDSDSEGSEDDSWSESEESSSGLSTSDLTAIDDTETEPETDAEVESRRTRGASGAARARRPAERQYVSTRGRQTPAVQPAPRSLARRPCGRAAAVSAPPSSRSRGGRRDPRLPAAPRAAPAAQARACSPEPREEGRGAGLGVAAGETAGWGAGSEEGRGERRARLLGEAGPPRVQARRRRRTELDRAPTPAPAPAPAPAPISTVIDLTANAPARPADPAPAAAPGPASAGAQIGTPAAAAAVTAAAAAPSVARSSAPSPAVTAAATSTAAAISTRAPTPSPAGRAPAADPRRAGAPALAGAARAEVGRNGNPGRERRPASAMARGDLDPGPESSAQKRRRTEMEVAAWVRESLLGTPRRSSAALAPQPGGRQGPSLAGLLGRCSGGSAWRQ</sequence>
<keyword id="KW-0010">Activator</keyword>
<keyword id="KW-0238">DNA-binding</keyword>
<keyword id="KW-0244">Early protein</keyword>
<keyword id="KW-0945">Host-virus interaction</keyword>
<keyword id="KW-1090">Inhibition of host innate immune response by virus</keyword>
<keyword id="KW-1092">Inhibition of host IRF3 by virus</keyword>
<keyword id="KW-1098">Inhibition of host mitotic exit by virus</keyword>
<keyword id="KW-1113">Inhibition of host RLR pathway by virus</keyword>
<keyword id="KW-0479">Metal-binding</keyword>
<keyword id="KW-1121">Modulation of host cell cycle by virus</keyword>
<keyword id="KW-1128">Modulation of host ubiquitin pathway by viral E3 ligase</keyword>
<keyword id="KW-1130">Modulation of host ubiquitin pathway by virus</keyword>
<keyword id="KW-0597">Phosphoprotein</keyword>
<keyword id="KW-0678">Repressor</keyword>
<keyword id="KW-0804">Transcription</keyword>
<keyword id="KW-0805">Transcription regulation</keyword>
<keyword id="KW-0808">Transferase</keyword>
<keyword id="KW-0832">Ubl conjugation</keyword>
<keyword id="KW-0833">Ubl conjugation pathway</keyword>
<keyword id="KW-0899">Viral immunoevasion</keyword>
<keyword id="KW-0862">Zinc</keyword>
<keyword id="KW-0863">Zinc-finger</keyword>